<feature type="chain" id="PRO_0000350975" description="Nucleolar protein 58">
    <location>
        <begin position="1"/>
        <end position="580"/>
    </location>
</feature>
<feature type="domain" description="Nop" evidence="2">
    <location>
        <begin position="285"/>
        <end position="410"/>
    </location>
</feature>
<feature type="region of interest" description="Disordered" evidence="3">
    <location>
        <begin position="444"/>
        <end position="580"/>
    </location>
</feature>
<feature type="compositionally biased region" description="Acidic residues" evidence="3">
    <location>
        <begin position="465"/>
        <end position="487"/>
    </location>
</feature>
<feature type="compositionally biased region" description="Basic and acidic residues" evidence="3">
    <location>
        <begin position="495"/>
        <end position="505"/>
    </location>
</feature>
<feature type="compositionally biased region" description="Basic and acidic residues" evidence="3">
    <location>
        <begin position="547"/>
        <end position="562"/>
    </location>
</feature>
<feature type="compositionally biased region" description="Basic residues" evidence="3">
    <location>
        <begin position="570"/>
        <end position="580"/>
    </location>
</feature>
<protein>
    <recommendedName>
        <fullName>Nucleolar protein 58</fullName>
    </recommendedName>
</protein>
<comment type="function">
    <text evidence="1">Required for pre-18S rRNA processing. May bind microtubules (By similarity).</text>
</comment>
<comment type="subcellular location">
    <subcellularLocation>
        <location evidence="1">Nucleus</location>
        <location evidence="1">Nucleolus</location>
    </subcellularLocation>
</comment>
<comment type="similarity">
    <text evidence="4">Belongs to the NOP5/NOP56 family.</text>
</comment>
<evidence type="ECO:0000250" key="1"/>
<evidence type="ECO:0000255" key="2">
    <source>
        <dbReference type="PROSITE-ProRule" id="PRU00690"/>
    </source>
</evidence>
<evidence type="ECO:0000256" key="3">
    <source>
        <dbReference type="SAM" id="MobiDB-lite"/>
    </source>
</evidence>
<evidence type="ECO:0000305" key="4"/>
<gene>
    <name type="primary">nop58</name>
    <name type="ORF">An02g09260</name>
</gene>
<accession>A2QE38</accession>
<reference key="1">
    <citation type="journal article" date="2007" name="Nat. Biotechnol.">
        <title>Genome sequencing and analysis of the versatile cell factory Aspergillus niger CBS 513.88.</title>
        <authorList>
            <person name="Pel H.J."/>
            <person name="de Winde J.H."/>
            <person name="Archer D.B."/>
            <person name="Dyer P.S."/>
            <person name="Hofmann G."/>
            <person name="Schaap P.J."/>
            <person name="Turner G."/>
            <person name="de Vries R.P."/>
            <person name="Albang R."/>
            <person name="Albermann K."/>
            <person name="Andersen M.R."/>
            <person name="Bendtsen J.D."/>
            <person name="Benen J.A.E."/>
            <person name="van den Berg M."/>
            <person name="Breestraat S."/>
            <person name="Caddick M.X."/>
            <person name="Contreras R."/>
            <person name="Cornell M."/>
            <person name="Coutinho P.M."/>
            <person name="Danchin E.G.J."/>
            <person name="Debets A.J.M."/>
            <person name="Dekker P."/>
            <person name="van Dijck P.W.M."/>
            <person name="van Dijk A."/>
            <person name="Dijkhuizen L."/>
            <person name="Driessen A.J.M."/>
            <person name="d'Enfert C."/>
            <person name="Geysens S."/>
            <person name="Goosen C."/>
            <person name="Groot G.S.P."/>
            <person name="de Groot P.W.J."/>
            <person name="Guillemette T."/>
            <person name="Henrissat B."/>
            <person name="Herweijer M."/>
            <person name="van den Hombergh J.P.T.W."/>
            <person name="van den Hondel C.A.M.J.J."/>
            <person name="van der Heijden R.T.J.M."/>
            <person name="van der Kaaij R.M."/>
            <person name="Klis F.M."/>
            <person name="Kools H.J."/>
            <person name="Kubicek C.P."/>
            <person name="van Kuyk P.A."/>
            <person name="Lauber J."/>
            <person name="Lu X."/>
            <person name="van der Maarel M.J.E.C."/>
            <person name="Meulenberg R."/>
            <person name="Menke H."/>
            <person name="Mortimer M.A."/>
            <person name="Nielsen J."/>
            <person name="Oliver S.G."/>
            <person name="Olsthoorn M."/>
            <person name="Pal K."/>
            <person name="van Peij N.N.M.E."/>
            <person name="Ram A.F.J."/>
            <person name="Rinas U."/>
            <person name="Roubos J.A."/>
            <person name="Sagt C.M.J."/>
            <person name="Schmoll M."/>
            <person name="Sun J."/>
            <person name="Ussery D."/>
            <person name="Varga J."/>
            <person name="Vervecken W."/>
            <person name="van de Vondervoort P.J.J."/>
            <person name="Wedler H."/>
            <person name="Woesten H.A.B."/>
            <person name="Zeng A.-P."/>
            <person name="van Ooyen A.J.J."/>
            <person name="Visser J."/>
            <person name="Stam H."/>
        </authorList>
    </citation>
    <scope>NUCLEOTIDE SEQUENCE [LARGE SCALE GENOMIC DNA]</scope>
    <source>
        <strain>ATCC MYA-4892 / CBS 513.88 / FGSC A1513</strain>
    </source>
</reference>
<proteinExistence type="inferred from homology"/>
<organism>
    <name type="scientific">Aspergillus niger (strain ATCC MYA-4892 / CBS 513.88 / FGSC A1513)</name>
    <dbReference type="NCBI Taxonomy" id="425011"/>
    <lineage>
        <taxon>Eukaryota</taxon>
        <taxon>Fungi</taxon>
        <taxon>Dikarya</taxon>
        <taxon>Ascomycota</taxon>
        <taxon>Pezizomycotina</taxon>
        <taxon>Eurotiomycetes</taxon>
        <taxon>Eurotiomycetidae</taxon>
        <taxon>Eurotiales</taxon>
        <taxon>Aspergillaceae</taxon>
        <taxon>Aspergillus</taxon>
        <taxon>Aspergillus subgen. Circumdati</taxon>
    </lineage>
</organism>
<sequence length="580" mass="63339">MTLFILTETSAGYALLKAKDKKLLKRDDLATEASTAEGVSNLLKLKSFQKFDSAATALEEVASLVEGKVTPRLASLLDEVKDEKKVSLAVADPKLGNAIGKLPGLSIELVADSSTTDVFRAIREHLPTLIPGLLPQDMSTMSLGLSHSLARHKLKFSPDKIDTMIVQAIGLLDDLDKELNNYAMRVKEWYGWHFPELAKILNDNIAYARLVLKMGMRTNWESSDLAEILPEEIEGAVKAAADRSMGTEISQEDLEHIQALAEQVVGFAEYRQQLAGYLTARMNAIAPNLTALVGDLVGARLIAHAGSLTNLSKSPASTLQILGAEKALFRALKTKHDTPKYGLIYHASLIGQATGKNKGKMARVLAAKASLGLRVDALAEWDDDATEEDKAALGTEARYNLERKLAAMEGKPLKPRGVAIAPNGAPQAQKFEINEARKYNADADAVTGDEPASAKKSKSKKLVEEVQDEEMADAADSDEESDSSDEETDKKSKKSKDSELEKLAEKAGLSLKRYKRKLERGEIQFDAEGNPSAVSKKDIKKAKKEAKKSAKGEEKKRKRTDDGEVDNSEKKKKKKKKGEE</sequence>
<name>NOP58_ASPNC</name>
<dbReference type="EMBL" id="AM270022">
    <property type="protein sequence ID" value="CAK44334.1"/>
    <property type="molecule type" value="Genomic_DNA"/>
</dbReference>
<dbReference type="RefSeq" id="XP_001400059.1">
    <property type="nucleotide sequence ID" value="XM_001400022.2"/>
</dbReference>
<dbReference type="SMR" id="A2QE38"/>
<dbReference type="EnsemblFungi" id="CAK44334">
    <property type="protein sequence ID" value="CAK44334"/>
    <property type="gene ID" value="An02g09260"/>
</dbReference>
<dbReference type="GeneID" id="4979416"/>
<dbReference type="KEGG" id="ang:An02g09260"/>
<dbReference type="VEuPathDB" id="FungiDB:An02g09260"/>
<dbReference type="HOGENOM" id="CLU_015495_5_0_1"/>
<dbReference type="Proteomes" id="UP000006706">
    <property type="component" value="Chromosome 4R"/>
</dbReference>
<dbReference type="GO" id="GO:0031428">
    <property type="term" value="C:box C/D methylation guide snoRNP complex"/>
    <property type="evidence" value="ECO:0007669"/>
    <property type="project" value="EnsemblFungi"/>
</dbReference>
<dbReference type="GO" id="GO:0005730">
    <property type="term" value="C:nucleolus"/>
    <property type="evidence" value="ECO:0007669"/>
    <property type="project" value="UniProtKB-SubCell"/>
</dbReference>
<dbReference type="GO" id="GO:0032040">
    <property type="term" value="C:small-subunit processome"/>
    <property type="evidence" value="ECO:0007669"/>
    <property type="project" value="EnsemblFungi"/>
</dbReference>
<dbReference type="GO" id="GO:0030515">
    <property type="term" value="F:snoRNA binding"/>
    <property type="evidence" value="ECO:0007669"/>
    <property type="project" value="InterPro"/>
</dbReference>
<dbReference type="GO" id="GO:0017069">
    <property type="term" value="F:snRNA binding"/>
    <property type="evidence" value="ECO:0007669"/>
    <property type="project" value="EnsemblFungi"/>
</dbReference>
<dbReference type="GO" id="GO:0000494">
    <property type="term" value="P:box C/D sno(s)RNA 3'-end processing"/>
    <property type="evidence" value="ECO:0007669"/>
    <property type="project" value="EnsemblFungi"/>
</dbReference>
<dbReference type="GO" id="GO:0000480">
    <property type="term" value="P:endonucleolytic cleavage in 5'-ETS of tricistronic rRNA transcript (SSU-rRNA, 5.8S rRNA, LSU-rRNA)"/>
    <property type="evidence" value="ECO:0007669"/>
    <property type="project" value="EnsemblFungi"/>
</dbReference>
<dbReference type="GO" id="GO:0000447">
    <property type="term" value="P:endonucleolytic cleavage in ITS1 to separate SSU-rRNA from 5.8S rRNA and LSU-rRNA from tricistronic rRNA transcript (SSU-rRNA, 5.8S rRNA, LSU-rRNA)"/>
    <property type="evidence" value="ECO:0007669"/>
    <property type="project" value="EnsemblFungi"/>
</dbReference>
<dbReference type="GO" id="GO:0000472">
    <property type="term" value="P:endonucleolytic cleavage to generate mature 5'-end of SSU-rRNA from (SSU-rRNA, 5.8S rRNA, LSU-rRNA)"/>
    <property type="evidence" value="ECO:0007669"/>
    <property type="project" value="EnsemblFungi"/>
</dbReference>
<dbReference type="GO" id="GO:1902570">
    <property type="term" value="P:protein localization to nucleolus"/>
    <property type="evidence" value="ECO:0007669"/>
    <property type="project" value="EnsemblFungi"/>
</dbReference>
<dbReference type="GO" id="GO:0000452">
    <property type="term" value="P:snoRNA guided rRNA 2'-O-methylation"/>
    <property type="evidence" value="ECO:0007669"/>
    <property type="project" value="EnsemblFungi"/>
</dbReference>
<dbReference type="FunFam" id="1.10.246.90:FF:000003">
    <property type="entry name" value="Nucleolar protein 58"/>
    <property type="match status" value="1"/>
</dbReference>
<dbReference type="FunFam" id="1.10.287.4070:FF:000001">
    <property type="entry name" value="Probable Nucleolar protein 58"/>
    <property type="match status" value="1"/>
</dbReference>
<dbReference type="Gene3D" id="1.10.287.4070">
    <property type="match status" value="1"/>
</dbReference>
<dbReference type="Gene3D" id="1.10.246.90">
    <property type="entry name" value="Nop domain"/>
    <property type="match status" value="1"/>
</dbReference>
<dbReference type="InterPro" id="IPR045056">
    <property type="entry name" value="Nop56/Nop58"/>
</dbReference>
<dbReference type="InterPro" id="IPR012974">
    <property type="entry name" value="NOP58/56_N"/>
</dbReference>
<dbReference type="InterPro" id="IPR042239">
    <property type="entry name" value="Nop_C"/>
</dbReference>
<dbReference type="InterPro" id="IPR002687">
    <property type="entry name" value="Nop_dom"/>
</dbReference>
<dbReference type="InterPro" id="IPR036070">
    <property type="entry name" value="Nop_dom_sf"/>
</dbReference>
<dbReference type="InterPro" id="IPR012976">
    <property type="entry name" value="NOSIC"/>
</dbReference>
<dbReference type="PANTHER" id="PTHR10894">
    <property type="entry name" value="NUCLEOLAR PROTEIN 5 NUCLEOLAR PROTEIN NOP5 NOP58"/>
    <property type="match status" value="1"/>
</dbReference>
<dbReference type="PANTHER" id="PTHR10894:SF1">
    <property type="entry name" value="NUCLEOLAR PROTEIN 58"/>
    <property type="match status" value="1"/>
</dbReference>
<dbReference type="Pfam" id="PF01798">
    <property type="entry name" value="Nop"/>
    <property type="match status" value="1"/>
</dbReference>
<dbReference type="Pfam" id="PF08156">
    <property type="entry name" value="NOP5NT"/>
    <property type="match status" value="1"/>
</dbReference>
<dbReference type="SMART" id="SM00931">
    <property type="entry name" value="NOSIC"/>
    <property type="match status" value="1"/>
</dbReference>
<dbReference type="SUPFAM" id="SSF89124">
    <property type="entry name" value="Nop domain"/>
    <property type="match status" value="1"/>
</dbReference>
<dbReference type="PROSITE" id="PS51358">
    <property type="entry name" value="NOP"/>
    <property type="match status" value="1"/>
</dbReference>
<keyword id="KW-0539">Nucleus</keyword>
<keyword id="KW-1185">Reference proteome</keyword>
<keyword id="KW-0687">Ribonucleoprotein</keyword>
<keyword id="KW-0690">Ribosome biogenesis</keyword>
<keyword id="KW-0698">rRNA processing</keyword>